<reference key="1">
    <citation type="journal article" date="2009" name="PLoS ONE">
        <title>Salmonella paratyphi C: genetic divergence from Salmonella choleraesuis and pathogenic convergence with Salmonella typhi.</title>
        <authorList>
            <person name="Liu W.-Q."/>
            <person name="Feng Y."/>
            <person name="Wang Y."/>
            <person name="Zou Q.-H."/>
            <person name="Chen F."/>
            <person name="Guo J.-T."/>
            <person name="Peng Y.-H."/>
            <person name="Jin Y."/>
            <person name="Li Y.-G."/>
            <person name="Hu S.-N."/>
            <person name="Johnston R.N."/>
            <person name="Liu G.-R."/>
            <person name="Liu S.-L."/>
        </authorList>
    </citation>
    <scope>NUCLEOTIDE SEQUENCE [LARGE SCALE GENOMIC DNA]</scope>
    <source>
        <strain>RKS4594</strain>
    </source>
</reference>
<evidence type="ECO:0000255" key="1">
    <source>
        <dbReference type="HAMAP-Rule" id="MF_01456"/>
    </source>
</evidence>
<accession>C0Q048</accession>
<keyword id="KW-0997">Cell inner membrane</keyword>
<keyword id="KW-1003">Cell membrane</keyword>
<keyword id="KW-0472">Membrane</keyword>
<keyword id="KW-0520">NAD</keyword>
<keyword id="KW-0874">Quinone</keyword>
<keyword id="KW-1278">Translocase</keyword>
<keyword id="KW-0812">Transmembrane</keyword>
<keyword id="KW-1133">Transmembrane helix</keyword>
<keyword id="KW-0813">Transport</keyword>
<keyword id="KW-0830">Ubiquinone</keyword>
<feature type="chain" id="PRO_0000390229" description="NADH-quinone oxidoreductase subunit K">
    <location>
        <begin position="1"/>
        <end position="100"/>
    </location>
</feature>
<feature type="transmembrane region" description="Helical" evidence="1">
    <location>
        <begin position="4"/>
        <end position="24"/>
    </location>
</feature>
<feature type="transmembrane region" description="Helical" evidence="1">
    <location>
        <begin position="28"/>
        <end position="48"/>
    </location>
</feature>
<feature type="transmembrane region" description="Helical" evidence="1">
    <location>
        <begin position="60"/>
        <end position="80"/>
    </location>
</feature>
<protein>
    <recommendedName>
        <fullName evidence="1">NADH-quinone oxidoreductase subunit K</fullName>
        <ecNumber evidence="1">7.1.1.-</ecNumber>
    </recommendedName>
    <alternativeName>
        <fullName evidence="1">NADH dehydrogenase I subunit K</fullName>
    </alternativeName>
    <alternativeName>
        <fullName evidence="1">NDH-1 subunit K</fullName>
    </alternativeName>
</protein>
<comment type="function">
    <text evidence="1">NDH-1 shuttles electrons from NADH, via FMN and iron-sulfur (Fe-S) centers, to quinones in the respiratory chain. The immediate electron acceptor for the enzyme in this species is believed to be ubiquinone. Couples the redox reaction to proton translocation (for every two electrons transferred, four hydrogen ions are translocated across the cytoplasmic membrane), and thus conserves the redox energy in a proton gradient.</text>
</comment>
<comment type="catalytic activity">
    <reaction evidence="1">
        <text>a quinone + NADH + 5 H(+)(in) = a quinol + NAD(+) + 4 H(+)(out)</text>
        <dbReference type="Rhea" id="RHEA:57888"/>
        <dbReference type="ChEBI" id="CHEBI:15378"/>
        <dbReference type="ChEBI" id="CHEBI:24646"/>
        <dbReference type="ChEBI" id="CHEBI:57540"/>
        <dbReference type="ChEBI" id="CHEBI:57945"/>
        <dbReference type="ChEBI" id="CHEBI:132124"/>
    </reaction>
</comment>
<comment type="subunit">
    <text evidence="1">NDH-1 is composed of 13 different subunits. Subunits NuoA, H, J, K, L, M, N constitute the membrane sector of the complex.</text>
</comment>
<comment type="subcellular location">
    <subcellularLocation>
        <location evidence="1">Cell inner membrane</location>
        <topology evidence="1">Multi-pass membrane protein</topology>
    </subcellularLocation>
</comment>
<comment type="similarity">
    <text evidence="1">Belongs to the complex I subunit 4L family.</text>
</comment>
<proteinExistence type="inferred from homology"/>
<dbReference type="EC" id="7.1.1.-" evidence="1"/>
<dbReference type="EMBL" id="CP000857">
    <property type="protein sequence ID" value="ACN45552.1"/>
    <property type="molecule type" value="Genomic_DNA"/>
</dbReference>
<dbReference type="RefSeq" id="WP_000612687.1">
    <property type="nucleotide sequence ID" value="NC_012125.1"/>
</dbReference>
<dbReference type="SMR" id="C0Q048"/>
<dbReference type="KEGG" id="sei:SPC_1390"/>
<dbReference type="HOGENOM" id="CLU_144724_0_1_6"/>
<dbReference type="Proteomes" id="UP000001599">
    <property type="component" value="Chromosome"/>
</dbReference>
<dbReference type="GO" id="GO:0030964">
    <property type="term" value="C:NADH dehydrogenase complex"/>
    <property type="evidence" value="ECO:0007669"/>
    <property type="project" value="TreeGrafter"/>
</dbReference>
<dbReference type="GO" id="GO:0005886">
    <property type="term" value="C:plasma membrane"/>
    <property type="evidence" value="ECO:0007669"/>
    <property type="project" value="UniProtKB-SubCell"/>
</dbReference>
<dbReference type="GO" id="GO:0050136">
    <property type="term" value="F:NADH:ubiquinone reductase (non-electrogenic) activity"/>
    <property type="evidence" value="ECO:0007669"/>
    <property type="project" value="UniProtKB-UniRule"/>
</dbReference>
<dbReference type="GO" id="GO:0048038">
    <property type="term" value="F:quinone binding"/>
    <property type="evidence" value="ECO:0007669"/>
    <property type="project" value="UniProtKB-KW"/>
</dbReference>
<dbReference type="GO" id="GO:0042773">
    <property type="term" value="P:ATP synthesis coupled electron transport"/>
    <property type="evidence" value="ECO:0007669"/>
    <property type="project" value="InterPro"/>
</dbReference>
<dbReference type="FunFam" id="1.10.287.3510:FF:000001">
    <property type="entry name" value="NADH-quinone oxidoreductase subunit K"/>
    <property type="match status" value="1"/>
</dbReference>
<dbReference type="Gene3D" id="1.10.287.3510">
    <property type="match status" value="1"/>
</dbReference>
<dbReference type="HAMAP" id="MF_01456">
    <property type="entry name" value="NDH1_NuoK"/>
    <property type="match status" value="1"/>
</dbReference>
<dbReference type="InterPro" id="IPR001133">
    <property type="entry name" value="NADH_UbQ_OxRdtase_chain4L/K"/>
</dbReference>
<dbReference type="InterPro" id="IPR039428">
    <property type="entry name" value="NUOK/Mnh_C1-like"/>
</dbReference>
<dbReference type="NCBIfam" id="NF004319">
    <property type="entry name" value="PRK05715.1-1"/>
    <property type="match status" value="1"/>
</dbReference>
<dbReference type="NCBIfam" id="NF004320">
    <property type="entry name" value="PRK05715.1-2"/>
    <property type="match status" value="1"/>
</dbReference>
<dbReference type="PANTHER" id="PTHR11434:SF16">
    <property type="entry name" value="NADH-UBIQUINONE OXIDOREDUCTASE CHAIN 4L"/>
    <property type="match status" value="1"/>
</dbReference>
<dbReference type="PANTHER" id="PTHR11434">
    <property type="entry name" value="NADH-UBIQUINONE OXIDOREDUCTASE SUBUNIT ND4L"/>
    <property type="match status" value="1"/>
</dbReference>
<dbReference type="Pfam" id="PF00420">
    <property type="entry name" value="Oxidored_q2"/>
    <property type="match status" value="1"/>
</dbReference>
<gene>
    <name evidence="1" type="primary">nuoK</name>
    <name type="ordered locus">SPC_1390</name>
</gene>
<organism>
    <name type="scientific">Salmonella paratyphi C (strain RKS4594)</name>
    <dbReference type="NCBI Taxonomy" id="476213"/>
    <lineage>
        <taxon>Bacteria</taxon>
        <taxon>Pseudomonadati</taxon>
        <taxon>Pseudomonadota</taxon>
        <taxon>Gammaproteobacteria</taxon>
        <taxon>Enterobacterales</taxon>
        <taxon>Enterobacteriaceae</taxon>
        <taxon>Salmonella</taxon>
    </lineage>
</organism>
<name>NUOK_SALPC</name>
<sequence>MIPLTHGLILAAILFVLGLTGLVIRRNLLFMLIGLEIMINASALAFVVAGSYWGQTDGQVMYILAISLAAAEASIGLALLLQLHRRRQNLNIDSVSEMRG</sequence>